<name>UBE3B_MOUSE</name>
<protein>
    <recommendedName>
        <fullName>Ubiquitin-protein ligase E3B</fullName>
        <ecNumber>2.3.2.26</ecNumber>
    </recommendedName>
    <alternativeName>
        <fullName>HECT-type ubiquitin transferase E3B</fullName>
    </alternativeName>
</protein>
<organism>
    <name type="scientific">Mus musculus</name>
    <name type="common">Mouse</name>
    <dbReference type="NCBI Taxonomy" id="10090"/>
    <lineage>
        <taxon>Eukaryota</taxon>
        <taxon>Metazoa</taxon>
        <taxon>Chordata</taxon>
        <taxon>Craniata</taxon>
        <taxon>Vertebrata</taxon>
        <taxon>Euteleostomi</taxon>
        <taxon>Mammalia</taxon>
        <taxon>Eutheria</taxon>
        <taxon>Euarchontoglires</taxon>
        <taxon>Glires</taxon>
        <taxon>Rodentia</taxon>
        <taxon>Myomorpha</taxon>
        <taxon>Muroidea</taxon>
        <taxon>Muridae</taxon>
        <taxon>Murinae</taxon>
        <taxon>Mus</taxon>
        <taxon>Mus</taxon>
    </lineage>
</organism>
<gene>
    <name type="primary">Ube3b</name>
</gene>
<feature type="chain" id="PRO_0000281883" description="Ubiquitin-protein ligase E3B">
    <location>
        <begin position="1"/>
        <end position="1070"/>
    </location>
</feature>
<feature type="domain" description="IQ" evidence="4">
    <location>
        <begin position="29"/>
        <end position="58"/>
    </location>
</feature>
<feature type="domain" description="HECT" evidence="3">
    <location>
        <begin position="704"/>
        <end position="1070"/>
    </location>
</feature>
<feature type="active site" description="Glycyl thioester intermediate" evidence="3">
    <location>
        <position position="1038"/>
    </location>
</feature>
<feature type="modified residue" description="N-acetylmethionine" evidence="2">
    <location>
        <position position="1"/>
    </location>
</feature>
<feature type="modified residue" description="Phosphoserine" evidence="2">
    <location>
        <position position="421"/>
    </location>
</feature>
<feature type="mutagenesis site" description="Unable to ubiquitinate PPP3CC." evidence="8">
    <original>C</original>
    <variation>S</variation>
    <location>
        <position position="1038"/>
    </location>
</feature>
<keyword id="KW-0007">Acetylation</keyword>
<keyword id="KW-0597">Phosphoprotein</keyword>
<keyword id="KW-1185">Reference proteome</keyword>
<keyword id="KW-0770">Synapse</keyword>
<keyword id="KW-0808">Transferase</keyword>
<keyword id="KW-0833">Ubl conjugation pathway</keyword>
<dbReference type="EC" id="2.3.2.26"/>
<dbReference type="EMBL" id="AF244362">
    <property type="protein sequence ID" value="AAG16783.3"/>
    <property type="molecule type" value="mRNA"/>
</dbReference>
<dbReference type="EMBL" id="BC023956">
    <property type="protein sequence ID" value="AAH23956.1"/>
    <property type="molecule type" value="mRNA"/>
</dbReference>
<dbReference type="EMBL" id="BC034059">
    <property type="protein sequence ID" value="AAH34059.1"/>
    <property type="status" value="ALT_INIT"/>
    <property type="molecule type" value="mRNA"/>
</dbReference>
<dbReference type="EMBL" id="BC096743">
    <property type="protein sequence ID" value="AAH96743.1"/>
    <property type="molecule type" value="mRNA"/>
</dbReference>
<dbReference type="CCDS" id="CCDS19564.1"/>
<dbReference type="RefSeq" id="NP_001411684.1">
    <property type="nucleotide sequence ID" value="NM_001424755.1"/>
</dbReference>
<dbReference type="RefSeq" id="NP_473434.2">
    <property type="nucleotide sequence ID" value="NM_054093.4"/>
</dbReference>
<dbReference type="SMR" id="Q9ES34"/>
<dbReference type="BioGRID" id="228169">
    <property type="interactions" value="4"/>
</dbReference>
<dbReference type="FunCoup" id="Q9ES34">
    <property type="interactions" value="2456"/>
</dbReference>
<dbReference type="STRING" id="10090.ENSMUSP00000073652"/>
<dbReference type="iPTMnet" id="Q9ES34"/>
<dbReference type="PhosphoSitePlus" id="Q9ES34"/>
<dbReference type="SwissPalm" id="Q9ES34"/>
<dbReference type="PaxDb" id="10090-ENSMUSP00000073652"/>
<dbReference type="PeptideAtlas" id="Q9ES34"/>
<dbReference type="ProteomicsDB" id="297787"/>
<dbReference type="Pumba" id="Q9ES34"/>
<dbReference type="Antibodypedia" id="30872">
    <property type="antibodies" value="82 antibodies from 19 providers"/>
</dbReference>
<dbReference type="DNASU" id="117146"/>
<dbReference type="Ensembl" id="ENSMUST00000074002.12">
    <property type="protein sequence ID" value="ENSMUSP00000073652.6"/>
    <property type="gene ID" value="ENSMUSG00000029577.14"/>
</dbReference>
<dbReference type="GeneID" id="117146"/>
<dbReference type="KEGG" id="mmu:117146"/>
<dbReference type="UCSC" id="uc008yzn.1">
    <property type="organism name" value="mouse"/>
</dbReference>
<dbReference type="AGR" id="MGI:1891295"/>
<dbReference type="CTD" id="89910"/>
<dbReference type="MGI" id="MGI:1891295">
    <property type="gene designation" value="Ube3b"/>
</dbReference>
<dbReference type="VEuPathDB" id="HostDB:ENSMUSG00000029577"/>
<dbReference type="eggNOG" id="KOG4427">
    <property type="taxonomic scope" value="Eukaryota"/>
</dbReference>
<dbReference type="GeneTree" id="ENSGT00940000156548"/>
<dbReference type="HOGENOM" id="CLU_002173_2_0_1"/>
<dbReference type="InParanoid" id="Q9ES34"/>
<dbReference type="OMA" id="NTKCTAP"/>
<dbReference type="OrthoDB" id="8068875at2759"/>
<dbReference type="PhylomeDB" id="Q9ES34"/>
<dbReference type="TreeFam" id="TF313215"/>
<dbReference type="Reactome" id="R-MMU-983168">
    <property type="pathway name" value="Antigen processing: Ubiquitination &amp; Proteasome degradation"/>
</dbReference>
<dbReference type="UniPathway" id="UPA00143"/>
<dbReference type="BioGRID-ORCS" id="117146">
    <property type="hits" value="2 hits in 76 CRISPR screens"/>
</dbReference>
<dbReference type="CD-CODE" id="CE726F99">
    <property type="entry name" value="Postsynaptic density"/>
</dbReference>
<dbReference type="ChiTaRS" id="Ube3b">
    <property type="organism name" value="mouse"/>
</dbReference>
<dbReference type="PRO" id="PR:Q9ES34"/>
<dbReference type="Proteomes" id="UP000000589">
    <property type="component" value="Chromosome 5"/>
</dbReference>
<dbReference type="RNAct" id="Q9ES34">
    <property type="molecule type" value="protein"/>
</dbReference>
<dbReference type="Bgee" id="ENSMUSG00000029577">
    <property type="expression patterns" value="Expressed in hindlimb stylopod muscle and 269 other cell types or tissues"/>
</dbReference>
<dbReference type="ExpressionAtlas" id="Q9ES34">
    <property type="expression patterns" value="baseline and differential"/>
</dbReference>
<dbReference type="GO" id="GO:0098978">
    <property type="term" value="C:glutamatergic synapse"/>
    <property type="evidence" value="ECO:0000314"/>
    <property type="project" value="SynGO"/>
</dbReference>
<dbReference type="GO" id="GO:0005739">
    <property type="term" value="C:mitochondrion"/>
    <property type="evidence" value="ECO:0007669"/>
    <property type="project" value="Ensembl"/>
</dbReference>
<dbReference type="GO" id="GO:0098794">
    <property type="term" value="C:postsynapse"/>
    <property type="evidence" value="ECO:0000314"/>
    <property type="project" value="SynGO"/>
</dbReference>
<dbReference type="GO" id="GO:0014069">
    <property type="term" value="C:postsynaptic density"/>
    <property type="evidence" value="ECO:0007669"/>
    <property type="project" value="UniProtKB-SubCell"/>
</dbReference>
<dbReference type="GO" id="GO:0061630">
    <property type="term" value="F:ubiquitin protein ligase activity"/>
    <property type="evidence" value="ECO:0007669"/>
    <property type="project" value="Ensembl"/>
</dbReference>
<dbReference type="GO" id="GO:0000209">
    <property type="term" value="P:protein polyubiquitination"/>
    <property type="evidence" value="ECO:0007669"/>
    <property type="project" value="InterPro"/>
</dbReference>
<dbReference type="GO" id="GO:0150052">
    <property type="term" value="P:regulation of postsynapse assembly"/>
    <property type="evidence" value="ECO:0000314"/>
    <property type="project" value="SynGO"/>
</dbReference>
<dbReference type="CDD" id="cd00078">
    <property type="entry name" value="HECTc"/>
    <property type="match status" value="1"/>
</dbReference>
<dbReference type="FunFam" id="3.30.2160.10:FF:000002">
    <property type="entry name" value="Putative Ubiquitin-protein ligase E3C"/>
    <property type="match status" value="1"/>
</dbReference>
<dbReference type="FunFam" id="3.30.2410.10:FF:000012">
    <property type="entry name" value="Ubiquitin-protein ligase E3B"/>
    <property type="match status" value="1"/>
</dbReference>
<dbReference type="Gene3D" id="3.30.2160.10">
    <property type="entry name" value="Hect, E3 ligase catalytic domain"/>
    <property type="match status" value="1"/>
</dbReference>
<dbReference type="Gene3D" id="3.30.2410.10">
    <property type="entry name" value="Hect, E3 ligase catalytic domain"/>
    <property type="match status" value="1"/>
</dbReference>
<dbReference type="Gene3D" id="3.90.1750.10">
    <property type="entry name" value="Hect, E3 ligase catalytic domains"/>
    <property type="match status" value="1"/>
</dbReference>
<dbReference type="InterPro" id="IPR044611">
    <property type="entry name" value="E3A/B/C-like"/>
</dbReference>
<dbReference type="InterPro" id="IPR000569">
    <property type="entry name" value="HECT_dom"/>
</dbReference>
<dbReference type="InterPro" id="IPR035983">
    <property type="entry name" value="Hect_E3_ubiquitin_ligase"/>
</dbReference>
<dbReference type="InterPro" id="IPR000048">
    <property type="entry name" value="IQ_motif_EF-hand-BS"/>
</dbReference>
<dbReference type="PANTHER" id="PTHR45700:SF3">
    <property type="entry name" value="UBIQUITIN-PROTEIN LIGASE E3B"/>
    <property type="match status" value="1"/>
</dbReference>
<dbReference type="PANTHER" id="PTHR45700">
    <property type="entry name" value="UBIQUITIN-PROTEIN LIGASE E3C"/>
    <property type="match status" value="1"/>
</dbReference>
<dbReference type="Pfam" id="PF00632">
    <property type="entry name" value="HECT"/>
    <property type="match status" value="1"/>
</dbReference>
<dbReference type="Pfam" id="PF00612">
    <property type="entry name" value="IQ"/>
    <property type="match status" value="1"/>
</dbReference>
<dbReference type="SMART" id="SM00119">
    <property type="entry name" value="HECTc"/>
    <property type="match status" value="1"/>
</dbReference>
<dbReference type="SUPFAM" id="SSF56204">
    <property type="entry name" value="Hect, E3 ligase catalytic domain"/>
    <property type="match status" value="1"/>
</dbReference>
<dbReference type="PROSITE" id="PS50237">
    <property type="entry name" value="HECT"/>
    <property type="match status" value="1"/>
</dbReference>
<dbReference type="PROSITE" id="PS50096">
    <property type="entry name" value="IQ"/>
    <property type="match status" value="1"/>
</dbReference>
<reference key="1">
    <citation type="journal article" date="2003" name="Genomics">
        <title>Characterization of the human UBE3B gene: structure, expression, evolution, and alternative splicing.</title>
        <authorList>
            <person name="Gong T.-W.L."/>
            <person name="Huang L."/>
            <person name="Warner S.J."/>
            <person name="Lomax M.I."/>
        </authorList>
    </citation>
    <scope>NUCLEOTIDE SEQUENCE [MRNA]</scope>
    <scope>TISSUE SPECIFICITY</scope>
    <source>
        <strain>C57BL/6J</strain>
    </source>
</reference>
<reference key="2">
    <citation type="journal article" date="2004" name="Genome Res.">
        <title>The status, quality, and expansion of the NIH full-length cDNA project: the Mammalian Gene Collection (MGC).</title>
        <authorList>
            <consortium name="The MGC Project Team"/>
        </authorList>
    </citation>
    <scope>NUCLEOTIDE SEQUENCE [LARGE SCALE MRNA]</scope>
    <source>
        <strain>C57BL/6J</strain>
        <strain>FVB/N</strain>
        <tissue>Eye</tissue>
        <tissue>Liver</tissue>
        <tissue>Mammary tumor</tissue>
    </source>
</reference>
<reference key="3">
    <citation type="journal article" date="2010" name="Cell">
        <title>A tissue-specific atlas of mouse protein phosphorylation and expression.</title>
        <authorList>
            <person name="Huttlin E.L."/>
            <person name="Jedrychowski M.P."/>
            <person name="Elias J.E."/>
            <person name="Goswami T."/>
            <person name="Rad R."/>
            <person name="Beausoleil S.A."/>
            <person name="Villen J."/>
            <person name="Haas W."/>
            <person name="Sowa M.E."/>
            <person name="Gygi S.P."/>
        </authorList>
    </citation>
    <scope>IDENTIFICATION BY MASS SPECTROMETRY [LARGE SCALE ANALYSIS]</scope>
    <source>
        <tissue>Brain</tissue>
        <tissue>Heart</tissue>
        <tissue>Liver</tissue>
        <tissue>Lung</tissue>
        <tissue>Testis</tissue>
    </source>
</reference>
<reference key="4">
    <citation type="journal article" date="2012" name="Am. J. Hum. Genet.">
        <title>Deficiency for the ubiquitin ligase UBE3B in a blepharophimosis-ptosis-intellectual-disability syndrome.</title>
        <authorList>
            <person name="Basel-Vanagaite L."/>
            <person name="Dallapiccola B."/>
            <person name="Ramirez-Solis R."/>
            <person name="Segref A."/>
            <person name="Thiele H."/>
            <person name="Edwards A."/>
            <person name="Arends M.J."/>
            <person name="Miro X."/>
            <person name="White J.K."/>
            <person name="Desir J."/>
            <person name="Abramowicz M."/>
            <person name="Dentici M.L."/>
            <person name="Lepri F."/>
            <person name="Hofmann K."/>
            <person name="Har-Zahav A."/>
            <person name="Ryder E."/>
            <person name="Karp N.A."/>
            <person name="Estabel J."/>
            <person name="Gerdin A.K."/>
            <person name="Podrini C."/>
            <person name="Ingham N.J."/>
            <person name="Altmueller J."/>
            <person name="Nuernberg G."/>
            <person name="Frommolt P."/>
            <person name="Abdelhak S."/>
            <person name="Pasmanik-Chor M."/>
            <person name="Konen O."/>
            <person name="Kelley R.I."/>
            <person name="Shohat M."/>
            <person name="Nuernberg P."/>
            <person name="Flint J."/>
            <person name="Steel K.P."/>
            <person name="Hoppe T."/>
            <person name="Kubisch C."/>
            <person name="Adams D.J."/>
            <person name="Borck G."/>
        </authorList>
    </citation>
    <scope>TISSUE SPECIFICITY</scope>
</reference>
<reference key="5">
    <citation type="journal article" date="2019" name="Proc. Natl. Acad. Sci. U.S.A.">
        <title>The ubiquitin ligase UBE3B, disrupted in intellectual disability and absent speech, regulates metabolic pathways by targeting BCKDK.</title>
        <authorList>
            <person name="Cheon S."/>
            <person name="Kaur K."/>
            <person name="Nijem N."/>
            <person name="Tuncay I.O."/>
            <person name="Kumar P."/>
            <person name="Dean M."/>
            <person name="Juusola J."/>
            <person name="Guillen-Sacoto M.J."/>
            <person name="Bedoukian E."/>
            <person name="Ierardi-Curto L."/>
            <person name="Kaplan P."/>
            <person name="Schaefer G.B."/>
            <person name="Mishra P."/>
            <person name="Chahrour M.H."/>
        </authorList>
    </citation>
    <scope>FUNCTION</scope>
    <scope>DISRUPTION PHENOTYPE</scope>
</reference>
<reference key="6">
    <citation type="journal article" date="2021" name="Mol. Psychiatry">
        <title>The murine ortholog of Kaufman oculocerebrofacial syndrome protein Ube3b regulates synapse number by ubiquitinating Ppp3cc.</title>
        <authorList>
            <person name="Ambrozkiewicz M.C."/>
            <person name="Borisova E."/>
            <person name="Schwark M."/>
            <person name="Ripamonti S."/>
            <person name="Schaub T."/>
            <person name="Smorodchenko A."/>
            <person name="Weber A.I."/>
            <person name="Rhee H.J."/>
            <person name="Altas B."/>
            <person name="Yilmaz R."/>
            <person name="Mueller S."/>
            <person name="Piepkorn L."/>
            <person name="Horan S.T."/>
            <person name="Straussberg R."/>
            <person name="Zaqout S."/>
            <person name="Jahn O."/>
            <person name="Dere E."/>
            <person name="Rosario M."/>
            <person name="Boehm-Sturm P."/>
            <person name="Borck G."/>
            <person name="Willig K.I."/>
            <person name="Rhee J."/>
            <person name="Tarabykin V."/>
            <person name="Kawabe H."/>
        </authorList>
    </citation>
    <scope>FUNCTION</scope>
    <scope>SUBCELLULAR LOCATION</scope>
    <scope>DISRUPTION PHENOTYPE</scope>
    <scope>MUTAGENESIS OF CYS-1038</scope>
</reference>
<comment type="function">
    <text evidence="1 7 8">E3 ubiquitin-protein ligase which accepts ubiquitin from an E2 ubiquitin-conjugating enzyme in the form of a thioester and then directly transfers the ubiquitin to targeted substrates. Ubiquitinates BCKDK and targets it for degradation, thereby regulating various metabolic processes (PubMed:30808755). Involved in the positive regulation of neurite branching in hippocampal neurons and the control of neuronal spine number and morphology, through the ubiquitination of PPP3CC (PubMed:30808755, PubMed:32249816).</text>
</comment>
<comment type="catalytic activity">
    <reaction>
        <text>S-ubiquitinyl-[E2 ubiquitin-conjugating enzyme]-L-cysteine + [acceptor protein]-L-lysine = [E2 ubiquitin-conjugating enzyme]-L-cysteine + N(6)-ubiquitinyl-[acceptor protein]-L-lysine.</text>
        <dbReference type="EC" id="2.3.2.26"/>
    </reaction>
</comment>
<comment type="pathway">
    <text>Protein modification; protein ubiquitination.</text>
</comment>
<comment type="subcellular location">
    <subcellularLocation>
        <location evidence="8">Postsynaptic density</location>
    </subcellularLocation>
</comment>
<comment type="tissue specificity">
    <text evidence="5 6">Widely expressed. High expression is observed in developing central nervous system.</text>
</comment>
<comment type="disruption phenotype">
    <text evidence="7 8">UBE3B knockout results in growth retardation, decreased grip strength, and loss of vocalization. Knockout mice show corpus callosum hypoplasia, enlarged ventricles, and decreased thickness of the somatosensory cortex (PubMed:30808755). Brain-specific conditional knockout (cKO) leads to impaired dendrite arborization and increased density of dendritic spines in CA1 excitatory and cortical pyramidal neurons, and alters the electrophysiological properties of neurons and neuronal networks in the hippocampus. cKO mice exhibit a decline in spatial memory, increased sociability, superior social memory, and a behavioral switch towards self-directed actions (PubMed:32249816).</text>
</comment>
<comment type="sequence caution" evidence="9">
    <conflict type="erroneous initiation">
        <sequence resource="EMBL-CDS" id="AAH34059"/>
    </conflict>
</comment>
<accession>Q9ES34</accession>
<accession>Q8K068</accession>
<evidence type="ECO:0000250" key="1"/>
<evidence type="ECO:0000250" key="2">
    <source>
        <dbReference type="UniProtKB" id="Q7Z3V4"/>
    </source>
</evidence>
<evidence type="ECO:0000255" key="3">
    <source>
        <dbReference type="PROSITE-ProRule" id="PRU00104"/>
    </source>
</evidence>
<evidence type="ECO:0000255" key="4">
    <source>
        <dbReference type="PROSITE-ProRule" id="PRU00116"/>
    </source>
</evidence>
<evidence type="ECO:0000269" key="5">
    <source>
    </source>
</evidence>
<evidence type="ECO:0000269" key="6">
    <source>
    </source>
</evidence>
<evidence type="ECO:0000269" key="7">
    <source>
    </source>
</evidence>
<evidence type="ECO:0000269" key="8">
    <source>
    </source>
</evidence>
<evidence type="ECO:0000305" key="9"/>
<sequence>MFTVSQTSRAWFIDRARQAREERLVQKERERSAVTIQALVRSFLCRRRLHRDIRKEIDEFFSADESGSSKRSALCIFKIARRLLFICKTTEDSERLEKLCRSILNSMDAENEPKVWYVSLALSKDLTLLWIKQIKSILWHCCELLGQLKPEILQDSRLITLYLTMLVTFTDTSTWKILRGKGESLRPALNHICANIMGHLNQRGLYSVLQVLLTRGLARPRPCLSKGMLTAAFSLALRPVVAAQFSDNLMRPFIIHVMSVPALVAHLSTVAPERLGVLESHDMLRKFIVFLRDRDRCRDACESLEGCHTLCLMGNLLHLGSLSLRLLEEEMDGFVSALTQMLCYCQKYVAQKKSNLTHWHPVLGWFSQPVDYGLNDSMYLITKQLQFLWAVPLIRILFSDILSRKLLEHAEPAPVQPQPSSPQTVLPVKSLLKRAFQKSASVRNILRPVGGRRVDSAEVRKVCNICVLYQTSLTTLTQIRLQILTGLTYLDDLLPKLWAFICELGPHGGLKLFLECLNNDTGESKQLLAMLMLFCDCSRHLITILDDIEVYEEQISFKLEELVTISSFLNSFVFKMIWDGIVENAKGETLELFQSVHGWLMVLYERDCRRRFAPEDHWLRRDLKPGVLFQELDKDRRRAQLVLQHIPHVVPHKNRVLLFRNMVIKEKEKLGLVETSSASPHVTHITIRRSRMLEDGYEQLRQLSQHAMKGVIRVKFVNDLGVDEAGIDQDGVFKEFLEEIIKRVFDPALNLFKTTSGDERLYPSPTSYIHENYLQLFEFVGKMLGKAVYEGIVVDVPFASFFLSQMLGHHHSVFYSSVDELPSLDSEFYKNLTSIKRYDGDIADLGLTLSYDEDVMGQLVCHELVPGGKTIPVTDENKISYIHLMAHFRMHTQIKNQTAALISGFRSIIKPEWIRMFSTPELQRLISGDNAEIDLEDLKKHTVYYGGFHGSHRVIIWLWDILASDFTPEERAMFLKFVTSCSRPPLLGFAYLKPPFSIRCVEVSDDQDTGDTLGSVLRGFFTIRKREPGGRLPTSSTCFNLLKLPNYSKKSVLREKLRYAISMNTGFELS</sequence>
<proteinExistence type="evidence at protein level"/>